<dbReference type="EC" id="1.14.16.5"/>
<dbReference type="EMBL" id="BC066626">
    <property type="protein sequence ID" value="AAH66626.1"/>
    <property type="molecule type" value="mRNA"/>
</dbReference>
<dbReference type="SMR" id="Q6NYE4"/>
<dbReference type="FunCoup" id="Q6NYE4">
    <property type="interactions" value="74"/>
</dbReference>
<dbReference type="STRING" id="7955.ENSDARP00000122798"/>
<dbReference type="PaxDb" id="7955-ENSDARP00000122798"/>
<dbReference type="AGR" id="ZFIN:ZDB-GENE-040426-2207"/>
<dbReference type="ZFIN" id="ZDB-GENE-040426-2207">
    <property type="gene designation" value="agmo"/>
</dbReference>
<dbReference type="eggNOG" id="KOG0872">
    <property type="taxonomic scope" value="Eukaryota"/>
</dbReference>
<dbReference type="InParanoid" id="Q6NYE4"/>
<dbReference type="PhylomeDB" id="Q6NYE4"/>
<dbReference type="Reactome" id="R-DRE-75109">
    <property type="pathway name" value="Triglyceride biosynthesis"/>
</dbReference>
<dbReference type="PRO" id="PR:Q6NYE4"/>
<dbReference type="Proteomes" id="UP000000437">
    <property type="component" value="Unplaced"/>
</dbReference>
<dbReference type="GO" id="GO:0005783">
    <property type="term" value="C:endoplasmic reticulum"/>
    <property type="evidence" value="ECO:0000250"/>
    <property type="project" value="UniProtKB"/>
</dbReference>
<dbReference type="GO" id="GO:0005789">
    <property type="term" value="C:endoplasmic reticulum membrane"/>
    <property type="evidence" value="ECO:0007669"/>
    <property type="project" value="UniProtKB-SubCell"/>
</dbReference>
<dbReference type="GO" id="GO:0050479">
    <property type="term" value="F:glyceryl-ether monooxygenase activity"/>
    <property type="evidence" value="ECO:0000250"/>
    <property type="project" value="UniProtKB"/>
</dbReference>
<dbReference type="GO" id="GO:0005506">
    <property type="term" value="F:iron ion binding"/>
    <property type="evidence" value="ECO:0000250"/>
    <property type="project" value="UniProtKB"/>
</dbReference>
<dbReference type="GO" id="GO:0046485">
    <property type="term" value="P:ether lipid metabolic process"/>
    <property type="evidence" value="ECO:0000250"/>
    <property type="project" value="UniProtKB"/>
</dbReference>
<dbReference type="GO" id="GO:0008610">
    <property type="term" value="P:lipid biosynthetic process"/>
    <property type="evidence" value="ECO:0007669"/>
    <property type="project" value="InterPro"/>
</dbReference>
<dbReference type="GO" id="GO:0006643">
    <property type="term" value="P:membrane lipid metabolic process"/>
    <property type="evidence" value="ECO:0000250"/>
    <property type="project" value="UniProtKB"/>
</dbReference>
<dbReference type="InterPro" id="IPR056853">
    <property type="entry name" value="AGMP_C"/>
</dbReference>
<dbReference type="InterPro" id="IPR006694">
    <property type="entry name" value="Fatty_acid_hydroxylase"/>
</dbReference>
<dbReference type="InterPro" id="IPR051689">
    <property type="entry name" value="Sterol_desaturase/TMEM195"/>
</dbReference>
<dbReference type="PANTHER" id="PTHR21624:SF1">
    <property type="entry name" value="ALKYLGLYCEROL MONOOXYGENASE"/>
    <property type="match status" value="1"/>
</dbReference>
<dbReference type="PANTHER" id="PTHR21624">
    <property type="entry name" value="STEROL DESATURASE-RELATED PROTEIN"/>
    <property type="match status" value="1"/>
</dbReference>
<dbReference type="Pfam" id="PF24858">
    <property type="entry name" value="AGMP_C"/>
    <property type="match status" value="1"/>
</dbReference>
<dbReference type="Pfam" id="PF04116">
    <property type="entry name" value="FA_hydroxylase"/>
    <property type="match status" value="1"/>
</dbReference>
<evidence type="ECO:0000250" key="1"/>
<evidence type="ECO:0000255" key="2"/>
<evidence type="ECO:0000305" key="3"/>
<name>ALKMO_DANRE</name>
<gene>
    <name type="primary">agmo</name>
    <name type="synonym">tmem195</name>
    <name type="ORF">zgc:77121</name>
</gene>
<sequence length="446" mass="51797">MAQVEANNVTVSQGFRMLFSLMTPEESSFATVEEVPKYVNQATPYFIGLILLEIVLGWLKTDGPHIKINDFITSLSAGMMSRLPQLMMRSVELSAYIYIWDNFHFLELPWDSAWTWWLAFLGVDMGYYWFHRFAHELNILWAGHQVHHSSEYYNLSTALRQSVTQQFSSWIFYSPLALLIPPSVFAVHIQFNLLYQFWIHTELVKDLGPLELILNTPSHHRVHHGRNPYCIDKNYAGILIIWDRMFGTFAPESDKVIYGLTHPIGTFEIWSVEFLYYPYLWQRFWEVEGISNKLSVIWKGPGWTPGKPRLGDIADIPQITGEEKPHDPAWSPVMQAYVILQFFLLLDVYNSLLLDQMILSELTVILLTAYVLLSLTSLGFLIDQRSNAAELEMLRCVLIMLLHRFGYIKPLLPALAFPMEAFILISTIYWSLQSVKQRTDKMKKQN</sequence>
<comment type="function">
    <text evidence="1">Glyceryl-ether monooxygenase that cleaves the O-alkyl bond of ether lipids. Ether lipids are essential components of brain membranes (By similarity).</text>
</comment>
<comment type="catalytic activity">
    <reaction>
        <text>1-O-(1,2-saturated-alkyl)-sn-glycerol + (6R)-L-erythro-5,6,7,8-tetrahydrobiopterin + O2 = a 1-(1-hydroxyalkyl)-sn-glycerol + (6R)-L-erythro-6,7-dihydrobiopterin + H2O</text>
        <dbReference type="Rhea" id="RHEA:36255"/>
        <dbReference type="ChEBI" id="CHEBI:15377"/>
        <dbReference type="ChEBI" id="CHEBI:15379"/>
        <dbReference type="ChEBI" id="CHEBI:43120"/>
        <dbReference type="ChEBI" id="CHEBI:59560"/>
        <dbReference type="ChEBI" id="CHEBI:73418"/>
        <dbReference type="ChEBI" id="CHEBI:83957"/>
        <dbReference type="EC" id="1.14.16.5"/>
    </reaction>
</comment>
<comment type="cofactor">
    <cofactor evidence="1">
        <name>Fe cation</name>
        <dbReference type="ChEBI" id="CHEBI:24875"/>
    </cofactor>
</comment>
<comment type="subcellular location">
    <subcellularLocation>
        <location evidence="1">Endoplasmic reticulum membrane</location>
        <topology evidence="1">Multi-pass membrane protein</topology>
    </subcellularLocation>
</comment>
<comment type="similarity">
    <text evidence="3">Belongs to the sterol desaturase family. TMEM195 subfamily.</text>
</comment>
<organism>
    <name type="scientific">Danio rerio</name>
    <name type="common">Zebrafish</name>
    <name type="synonym">Brachydanio rerio</name>
    <dbReference type="NCBI Taxonomy" id="7955"/>
    <lineage>
        <taxon>Eukaryota</taxon>
        <taxon>Metazoa</taxon>
        <taxon>Chordata</taxon>
        <taxon>Craniata</taxon>
        <taxon>Vertebrata</taxon>
        <taxon>Euteleostomi</taxon>
        <taxon>Actinopterygii</taxon>
        <taxon>Neopterygii</taxon>
        <taxon>Teleostei</taxon>
        <taxon>Ostariophysi</taxon>
        <taxon>Cypriniformes</taxon>
        <taxon>Danionidae</taxon>
        <taxon>Danioninae</taxon>
        <taxon>Danio</taxon>
    </lineage>
</organism>
<keyword id="KW-0256">Endoplasmic reticulum</keyword>
<keyword id="KW-0408">Iron</keyword>
<keyword id="KW-0443">Lipid metabolism</keyword>
<keyword id="KW-0472">Membrane</keyword>
<keyword id="KW-0560">Oxidoreductase</keyword>
<keyword id="KW-1185">Reference proteome</keyword>
<keyword id="KW-0812">Transmembrane</keyword>
<keyword id="KW-1133">Transmembrane helix</keyword>
<proteinExistence type="evidence at transcript level"/>
<protein>
    <recommendedName>
        <fullName>Alkylglycerol monooxygenase</fullName>
        <ecNumber>1.14.16.5</ecNumber>
    </recommendedName>
    <alternativeName>
        <fullName>Transmembrane protein 195</fullName>
    </alternativeName>
</protein>
<feature type="chain" id="PRO_0000299303" description="Alkylglycerol monooxygenase">
    <location>
        <begin position="1"/>
        <end position="446"/>
    </location>
</feature>
<feature type="transmembrane region" description="Helical" evidence="2">
    <location>
        <begin position="39"/>
        <end position="59"/>
    </location>
</feature>
<feature type="transmembrane region" description="Helical" evidence="2">
    <location>
        <begin position="103"/>
        <end position="123"/>
    </location>
</feature>
<feature type="transmembrane region" description="Helical" evidence="2">
    <location>
        <begin position="167"/>
        <end position="187"/>
    </location>
</feature>
<feature type="transmembrane region" description="Helical" evidence="2">
    <location>
        <begin position="329"/>
        <end position="349"/>
    </location>
</feature>
<feature type="transmembrane region" description="Helical" evidence="2">
    <location>
        <begin position="362"/>
        <end position="382"/>
    </location>
</feature>
<feature type="transmembrane region" description="Helical" evidence="2">
    <location>
        <begin position="410"/>
        <end position="430"/>
    </location>
</feature>
<feature type="domain" description="Fatty acid hydroxylase" evidence="2">
    <location>
        <begin position="117"/>
        <end position="248"/>
    </location>
</feature>
<feature type="short sequence motif" description="Histidine box-1">
    <location>
        <begin position="131"/>
        <end position="135"/>
    </location>
</feature>
<feature type="short sequence motif" description="Histidine box-2">
    <location>
        <begin position="144"/>
        <end position="148"/>
    </location>
</feature>
<feature type="short sequence motif" description="Histidine box-3">
    <location>
        <begin position="220"/>
        <end position="224"/>
    </location>
</feature>
<reference key="1">
    <citation type="submission" date="2004-02" db="EMBL/GenBank/DDBJ databases">
        <authorList>
            <consortium name="NIH - Zebrafish Gene Collection (ZGC) project"/>
        </authorList>
    </citation>
    <scope>NUCLEOTIDE SEQUENCE [LARGE SCALE MRNA]</scope>
    <source>
        <tissue>Kidney</tissue>
    </source>
</reference>
<accession>Q6NYE4</accession>